<sequence length="77" mass="9061">MKEQKLIHEGVIIESLPNGMFRVRLDNEDLILGYVSGRIRRSFIRILPGDRVKIEVSRYDSTKGRIIYRLRNKDSND</sequence>
<geneLocation type="chloroplast"/>
<evidence type="ECO:0000255" key="1">
    <source>
        <dbReference type="HAMAP-Rule" id="MF_00075"/>
    </source>
</evidence>
<name>IF1C_DIOEL</name>
<organism>
    <name type="scientific">Dioscorea elephantipes</name>
    <name type="common">Elephant's foot yam</name>
    <name type="synonym">Testudinaria elephantipes</name>
    <dbReference type="NCBI Taxonomy" id="145284"/>
    <lineage>
        <taxon>Eukaryota</taxon>
        <taxon>Viridiplantae</taxon>
        <taxon>Streptophyta</taxon>
        <taxon>Embryophyta</taxon>
        <taxon>Tracheophyta</taxon>
        <taxon>Spermatophyta</taxon>
        <taxon>Magnoliopsida</taxon>
        <taxon>Liliopsida</taxon>
        <taxon>Dioscoreales</taxon>
        <taxon>Dioscoreaceae</taxon>
        <taxon>Dioscorea</taxon>
    </lineage>
</organism>
<proteinExistence type="inferred from homology"/>
<keyword id="KW-0150">Chloroplast</keyword>
<keyword id="KW-0396">Initiation factor</keyword>
<keyword id="KW-0934">Plastid</keyword>
<keyword id="KW-0648">Protein biosynthesis</keyword>
<keyword id="KW-0694">RNA-binding</keyword>
<keyword id="KW-0699">rRNA-binding</keyword>
<protein>
    <recommendedName>
        <fullName evidence="1">Translation initiation factor IF-1, chloroplastic</fullName>
    </recommendedName>
</protein>
<gene>
    <name evidence="1" type="primary">infA</name>
</gene>
<comment type="function">
    <text evidence="1">One of the essential components for the initiation of protein synthesis. Stabilizes the binding of IF-2 and IF-3 on the 30S subunit to which N-formylmethionyl-tRNA(fMet) subsequently binds. Helps modulate mRNA selection, yielding the 30S pre-initiation complex (PIC). Upon addition of the 50S ribosomal subunit IF-1, IF-2 and IF-3 are released leaving the mature 70S translation initiation complex.</text>
</comment>
<comment type="subunit">
    <text evidence="1">Component of the 30S ribosomal translation pre-initiation complex which assembles on the 30S ribosome in the order IF-2 and IF-3, IF-1 and N-formylmethionyl-tRNA(fMet); mRNA recruitment can occur at any time during PIC assembly.</text>
</comment>
<comment type="subcellular location">
    <subcellularLocation>
        <location evidence="1">Plastid</location>
        <location evidence="1">Chloroplast</location>
    </subcellularLocation>
</comment>
<comment type="similarity">
    <text evidence="1">Belongs to the IF-1 family.</text>
</comment>
<dbReference type="EMBL" id="EF380353">
    <property type="protein sequence ID" value="ABR01464.1"/>
    <property type="molecule type" value="Genomic_DNA"/>
</dbReference>
<dbReference type="RefSeq" id="YP_001294387.1">
    <property type="nucleotide sequence ID" value="NC_009601.1"/>
</dbReference>
<dbReference type="SMR" id="A6MMP2"/>
<dbReference type="GeneID" id="5236584"/>
<dbReference type="GO" id="GO:0009507">
    <property type="term" value="C:chloroplast"/>
    <property type="evidence" value="ECO:0007669"/>
    <property type="project" value="UniProtKB-SubCell"/>
</dbReference>
<dbReference type="GO" id="GO:0005829">
    <property type="term" value="C:cytosol"/>
    <property type="evidence" value="ECO:0007669"/>
    <property type="project" value="TreeGrafter"/>
</dbReference>
<dbReference type="GO" id="GO:0043022">
    <property type="term" value="F:ribosome binding"/>
    <property type="evidence" value="ECO:0007669"/>
    <property type="project" value="UniProtKB-UniRule"/>
</dbReference>
<dbReference type="GO" id="GO:0019843">
    <property type="term" value="F:rRNA binding"/>
    <property type="evidence" value="ECO:0007669"/>
    <property type="project" value="UniProtKB-UniRule"/>
</dbReference>
<dbReference type="GO" id="GO:0003743">
    <property type="term" value="F:translation initiation factor activity"/>
    <property type="evidence" value="ECO:0007669"/>
    <property type="project" value="UniProtKB-UniRule"/>
</dbReference>
<dbReference type="CDD" id="cd04451">
    <property type="entry name" value="S1_IF1"/>
    <property type="match status" value="1"/>
</dbReference>
<dbReference type="FunFam" id="2.40.50.140:FF:000019">
    <property type="entry name" value="Translation initiation factor IF-1, chloroplastic"/>
    <property type="match status" value="1"/>
</dbReference>
<dbReference type="Gene3D" id="2.40.50.140">
    <property type="entry name" value="Nucleic acid-binding proteins"/>
    <property type="match status" value="1"/>
</dbReference>
<dbReference type="HAMAP" id="MF_00075">
    <property type="entry name" value="IF_1"/>
    <property type="match status" value="1"/>
</dbReference>
<dbReference type="InterPro" id="IPR012340">
    <property type="entry name" value="NA-bd_OB-fold"/>
</dbReference>
<dbReference type="InterPro" id="IPR006196">
    <property type="entry name" value="RNA-binding_domain_S1_IF1"/>
</dbReference>
<dbReference type="InterPro" id="IPR003029">
    <property type="entry name" value="S1_domain"/>
</dbReference>
<dbReference type="InterPro" id="IPR004368">
    <property type="entry name" value="TIF_IF1"/>
</dbReference>
<dbReference type="NCBIfam" id="TIGR00008">
    <property type="entry name" value="infA"/>
    <property type="match status" value="1"/>
</dbReference>
<dbReference type="PANTHER" id="PTHR33370">
    <property type="entry name" value="TRANSLATION INITIATION FACTOR IF-1, CHLOROPLASTIC"/>
    <property type="match status" value="1"/>
</dbReference>
<dbReference type="PANTHER" id="PTHR33370:SF1">
    <property type="entry name" value="TRANSLATION INITIATION FACTOR IF-1, CHLOROPLASTIC"/>
    <property type="match status" value="1"/>
</dbReference>
<dbReference type="Pfam" id="PF01176">
    <property type="entry name" value="eIF-1a"/>
    <property type="match status" value="1"/>
</dbReference>
<dbReference type="SMART" id="SM00316">
    <property type="entry name" value="S1"/>
    <property type="match status" value="1"/>
</dbReference>
<dbReference type="SUPFAM" id="SSF50249">
    <property type="entry name" value="Nucleic acid-binding proteins"/>
    <property type="match status" value="1"/>
</dbReference>
<dbReference type="PROSITE" id="PS50832">
    <property type="entry name" value="S1_IF1_TYPE"/>
    <property type="match status" value="1"/>
</dbReference>
<feature type="chain" id="PRO_0000338962" description="Translation initiation factor IF-1, chloroplastic">
    <location>
        <begin position="1"/>
        <end position="77"/>
    </location>
</feature>
<feature type="domain" description="S1-like" evidence="1">
    <location>
        <begin position="1"/>
        <end position="71"/>
    </location>
</feature>
<accession>A6MMP2</accession>
<reference key="1">
    <citation type="journal article" date="2007" name="Mol. Phylogenet. Evol.">
        <title>Phylogenetic and evolutionary implications of complete chloroplast genome sequences of four early-diverging angiosperms: Buxus (Buxaceae), Chloranthus (Chloranthaceae), Dioscorea (Dioscoreaceae), and Illicium (Schisandraceae).</title>
        <authorList>
            <person name="Hansen D.R."/>
            <person name="Dastidar S.G."/>
            <person name="Cai Z."/>
            <person name="Penaflor C."/>
            <person name="Kuehl J.V."/>
            <person name="Boore J.L."/>
            <person name="Jansen R.K."/>
        </authorList>
    </citation>
    <scope>NUCLEOTIDE SEQUENCE [LARGE SCALE GENOMIC DNA]</scope>
</reference>